<feature type="chain" id="PRO_0000090132" description="Triosephosphate isomerase">
    <location>
        <begin position="1"/>
        <end position="247"/>
    </location>
</feature>
<feature type="active site" description="Electrophile" evidence="1">
    <location>
        <position position="94"/>
    </location>
</feature>
<feature type="active site" description="Proton acceptor" evidence="1">
    <location>
        <position position="164"/>
    </location>
</feature>
<feature type="binding site" evidence="1">
    <location>
        <position position="10"/>
    </location>
    <ligand>
        <name>substrate</name>
    </ligand>
</feature>
<feature type="binding site" evidence="1">
    <location>
        <position position="12"/>
    </location>
    <ligand>
        <name>substrate</name>
    </ligand>
</feature>
<feature type="sequence conflict" description="In Ref. 2; AAR09740." evidence="2" ref="2">
    <original>I</original>
    <variation>V</variation>
    <location>
        <position position="100"/>
    </location>
</feature>
<comment type="catalytic activity">
    <reaction>
        <text>D-glyceraldehyde 3-phosphate = dihydroxyacetone phosphate</text>
        <dbReference type="Rhea" id="RHEA:18585"/>
        <dbReference type="ChEBI" id="CHEBI:57642"/>
        <dbReference type="ChEBI" id="CHEBI:59776"/>
        <dbReference type="EC" id="5.3.1.1"/>
    </reaction>
</comment>
<comment type="pathway">
    <text>Carbohydrate biosynthesis; gluconeogenesis.</text>
</comment>
<comment type="pathway">
    <text>Carbohydrate degradation; glycolysis; D-glyceraldehyde 3-phosphate from glycerone phosphate: step 1/1.</text>
</comment>
<comment type="subunit">
    <text>Homodimer.</text>
</comment>
<comment type="similarity">
    <text evidence="2">Belongs to the triosephosphate isomerase family.</text>
</comment>
<accession>O77458</accession>
<accession>Q6XIW2</accession>
<organism>
    <name type="scientific">Drosophila yakuba</name>
    <name type="common">Fruit fly</name>
    <dbReference type="NCBI Taxonomy" id="7245"/>
    <lineage>
        <taxon>Eukaryota</taxon>
        <taxon>Metazoa</taxon>
        <taxon>Ecdysozoa</taxon>
        <taxon>Arthropoda</taxon>
        <taxon>Hexapoda</taxon>
        <taxon>Insecta</taxon>
        <taxon>Pterygota</taxon>
        <taxon>Neoptera</taxon>
        <taxon>Endopterygota</taxon>
        <taxon>Diptera</taxon>
        <taxon>Brachycera</taxon>
        <taxon>Muscomorpha</taxon>
        <taxon>Ephydroidea</taxon>
        <taxon>Drosophilidae</taxon>
        <taxon>Drosophila</taxon>
        <taxon>Sophophora</taxon>
    </lineage>
</organism>
<protein>
    <recommendedName>
        <fullName>Triosephosphate isomerase</fullName>
        <shortName>TIM</shortName>
        <ecNumber>5.3.1.1</ecNumber>
    </recommendedName>
    <alternativeName>
        <fullName>Triose-phosphate isomerase</fullName>
    </alternativeName>
</protein>
<gene>
    <name type="primary">Tpi</name>
</gene>
<proteinExistence type="evidence at transcript level"/>
<evidence type="ECO:0000250" key="1"/>
<evidence type="ECO:0000305" key="2"/>
<reference key="1">
    <citation type="journal article" date="1998" name="Mol. Biol. Evol.">
        <title>Nucleotide variation in the triosephosphate isomerase (Tpi) locus of Drosophila melanogaster and D. simulans.</title>
        <authorList>
            <person name="Hasson E."/>
            <person name="Wang I.-N."/>
            <person name="Zeng L.-W."/>
            <person name="Kreitman M."/>
            <person name="Eanes W.F."/>
        </authorList>
    </citation>
    <scope>NUCLEOTIDE SEQUENCE [GENOMIC DNA]</scope>
</reference>
<reference key="2">
    <citation type="journal article" date="2003" name="Genome Res.">
        <title>An evolutionary analysis of orphan genes in Drosophila.</title>
        <authorList>
            <person name="Domazet-Loso T."/>
            <person name="Tautz D."/>
        </authorList>
    </citation>
    <scope>NUCLEOTIDE SEQUENCE [MRNA] OF 78-247</scope>
</reference>
<name>TPIS_DROYA</name>
<dbReference type="EC" id="5.3.1.1"/>
<dbReference type="EMBL" id="U60870">
    <property type="protein sequence ID" value="AAC39075.1"/>
    <property type="molecule type" value="Genomic_DNA"/>
</dbReference>
<dbReference type="EMBL" id="AY231717">
    <property type="protein sequence ID" value="AAR09740.1"/>
    <property type="molecule type" value="mRNA"/>
</dbReference>
<dbReference type="SMR" id="O77458"/>
<dbReference type="eggNOG" id="KOG1643">
    <property type="taxonomic scope" value="Eukaryota"/>
</dbReference>
<dbReference type="OrthoDB" id="6715177at2759"/>
<dbReference type="UniPathway" id="UPA00109">
    <property type="reaction ID" value="UER00189"/>
</dbReference>
<dbReference type="UniPathway" id="UPA00138"/>
<dbReference type="GO" id="GO:0005829">
    <property type="term" value="C:cytosol"/>
    <property type="evidence" value="ECO:0007669"/>
    <property type="project" value="TreeGrafter"/>
</dbReference>
<dbReference type="GO" id="GO:0004807">
    <property type="term" value="F:triose-phosphate isomerase activity"/>
    <property type="evidence" value="ECO:0000250"/>
    <property type="project" value="UniProtKB"/>
</dbReference>
<dbReference type="GO" id="GO:0006094">
    <property type="term" value="P:gluconeogenesis"/>
    <property type="evidence" value="ECO:0007669"/>
    <property type="project" value="UniProtKB-UniPathway"/>
</dbReference>
<dbReference type="GO" id="GO:0046166">
    <property type="term" value="P:glyceraldehyde-3-phosphate biosynthetic process"/>
    <property type="evidence" value="ECO:0007669"/>
    <property type="project" value="TreeGrafter"/>
</dbReference>
<dbReference type="GO" id="GO:0019682">
    <property type="term" value="P:glyceraldehyde-3-phosphate metabolic process"/>
    <property type="evidence" value="ECO:0000250"/>
    <property type="project" value="UniProtKB"/>
</dbReference>
<dbReference type="GO" id="GO:0019563">
    <property type="term" value="P:glycerol catabolic process"/>
    <property type="evidence" value="ECO:0007669"/>
    <property type="project" value="TreeGrafter"/>
</dbReference>
<dbReference type="GO" id="GO:0006096">
    <property type="term" value="P:glycolytic process"/>
    <property type="evidence" value="ECO:0007669"/>
    <property type="project" value="UniProtKB-UniPathway"/>
</dbReference>
<dbReference type="CDD" id="cd00311">
    <property type="entry name" value="TIM"/>
    <property type="match status" value="1"/>
</dbReference>
<dbReference type="FunFam" id="3.20.20.70:FF:000025">
    <property type="entry name" value="Triosephosphate isomerase"/>
    <property type="match status" value="1"/>
</dbReference>
<dbReference type="Gene3D" id="3.20.20.70">
    <property type="entry name" value="Aldolase class I"/>
    <property type="match status" value="1"/>
</dbReference>
<dbReference type="HAMAP" id="MF_00147_B">
    <property type="entry name" value="TIM_B"/>
    <property type="match status" value="1"/>
</dbReference>
<dbReference type="InterPro" id="IPR013785">
    <property type="entry name" value="Aldolase_TIM"/>
</dbReference>
<dbReference type="InterPro" id="IPR035990">
    <property type="entry name" value="TIM_sf"/>
</dbReference>
<dbReference type="InterPro" id="IPR022896">
    <property type="entry name" value="TrioseP_Isoase_bac/euk"/>
</dbReference>
<dbReference type="InterPro" id="IPR000652">
    <property type="entry name" value="Triosephosphate_isomerase"/>
</dbReference>
<dbReference type="InterPro" id="IPR020861">
    <property type="entry name" value="Triosephosphate_isomerase_AS"/>
</dbReference>
<dbReference type="NCBIfam" id="TIGR00419">
    <property type="entry name" value="tim"/>
    <property type="match status" value="1"/>
</dbReference>
<dbReference type="PANTHER" id="PTHR21139">
    <property type="entry name" value="TRIOSEPHOSPHATE ISOMERASE"/>
    <property type="match status" value="1"/>
</dbReference>
<dbReference type="PANTHER" id="PTHR21139:SF2">
    <property type="entry name" value="TRIOSEPHOSPHATE ISOMERASE"/>
    <property type="match status" value="1"/>
</dbReference>
<dbReference type="Pfam" id="PF00121">
    <property type="entry name" value="TIM"/>
    <property type="match status" value="1"/>
</dbReference>
<dbReference type="SUPFAM" id="SSF51351">
    <property type="entry name" value="Triosephosphate isomerase (TIM)"/>
    <property type="match status" value="1"/>
</dbReference>
<dbReference type="PROSITE" id="PS00171">
    <property type="entry name" value="TIM_1"/>
    <property type="match status" value="1"/>
</dbReference>
<dbReference type="PROSITE" id="PS51440">
    <property type="entry name" value="TIM_2"/>
    <property type="match status" value="1"/>
</dbReference>
<sequence length="247" mass="26626">MSRKFCVGGNWKMNGDQKSIAEIAKTLSSAALDPNTEVVIGCPAIYLMYARNLLPCELGLAGQNAYKVAKGAFTGEISPAMLKDIGADWVILGHSERRAIFGESDALIAEKAEHALAEGLKVIACIGETLEEREAGKTNEVVARQMCAYAQKIKDWKNVVVAYEPVWAIGTGKTATPDQAQEVHAFLRQWLSDNISKEVSASLRIQYGGSVTAANAKELAKKPDIDGFLVGGASLKPEFVDIINARQ</sequence>
<keyword id="KW-0312">Gluconeogenesis</keyword>
<keyword id="KW-0324">Glycolysis</keyword>
<keyword id="KW-0413">Isomerase</keyword>